<dbReference type="EC" id="2.4.2.18" evidence="1"/>
<dbReference type="EMBL" id="AM167904">
    <property type="protein sequence ID" value="CAJ50762.1"/>
    <property type="molecule type" value="Genomic_DNA"/>
</dbReference>
<dbReference type="RefSeq" id="WP_012418790.1">
    <property type="nucleotide sequence ID" value="NC_010645.1"/>
</dbReference>
<dbReference type="SMR" id="Q2KU98"/>
<dbReference type="STRING" id="360910.BAV3153"/>
<dbReference type="GeneID" id="92933590"/>
<dbReference type="KEGG" id="bav:BAV3153"/>
<dbReference type="eggNOG" id="COG0547">
    <property type="taxonomic scope" value="Bacteria"/>
</dbReference>
<dbReference type="HOGENOM" id="CLU_034315_2_1_4"/>
<dbReference type="OrthoDB" id="9806430at2"/>
<dbReference type="UniPathway" id="UPA00035">
    <property type="reaction ID" value="UER00041"/>
</dbReference>
<dbReference type="Proteomes" id="UP000001977">
    <property type="component" value="Chromosome"/>
</dbReference>
<dbReference type="GO" id="GO:0005829">
    <property type="term" value="C:cytosol"/>
    <property type="evidence" value="ECO:0007669"/>
    <property type="project" value="TreeGrafter"/>
</dbReference>
<dbReference type="GO" id="GO:0004048">
    <property type="term" value="F:anthranilate phosphoribosyltransferase activity"/>
    <property type="evidence" value="ECO:0007669"/>
    <property type="project" value="UniProtKB-UniRule"/>
</dbReference>
<dbReference type="GO" id="GO:0000287">
    <property type="term" value="F:magnesium ion binding"/>
    <property type="evidence" value="ECO:0007669"/>
    <property type="project" value="UniProtKB-UniRule"/>
</dbReference>
<dbReference type="GO" id="GO:0000162">
    <property type="term" value="P:L-tryptophan biosynthetic process"/>
    <property type="evidence" value="ECO:0007669"/>
    <property type="project" value="UniProtKB-UniRule"/>
</dbReference>
<dbReference type="FunFam" id="3.40.1030.10:FF:000002">
    <property type="entry name" value="Anthranilate phosphoribosyltransferase"/>
    <property type="match status" value="1"/>
</dbReference>
<dbReference type="Gene3D" id="3.40.1030.10">
    <property type="entry name" value="Nucleoside phosphorylase/phosphoribosyltransferase catalytic domain"/>
    <property type="match status" value="1"/>
</dbReference>
<dbReference type="Gene3D" id="1.20.970.10">
    <property type="entry name" value="Transferase, Pyrimidine Nucleoside Phosphorylase, Chain C"/>
    <property type="match status" value="1"/>
</dbReference>
<dbReference type="HAMAP" id="MF_00211">
    <property type="entry name" value="TrpD"/>
    <property type="match status" value="1"/>
</dbReference>
<dbReference type="InterPro" id="IPR005940">
    <property type="entry name" value="Anthranilate_Pribosyl_Tfrase"/>
</dbReference>
<dbReference type="InterPro" id="IPR000312">
    <property type="entry name" value="Glycosyl_Trfase_fam3"/>
</dbReference>
<dbReference type="InterPro" id="IPR017459">
    <property type="entry name" value="Glycosyl_Trfase_fam3_N_dom"/>
</dbReference>
<dbReference type="InterPro" id="IPR036320">
    <property type="entry name" value="Glycosyl_Trfase_fam3_N_dom_sf"/>
</dbReference>
<dbReference type="InterPro" id="IPR035902">
    <property type="entry name" value="Nuc_phospho_transferase"/>
</dbReference>
<dbReference type="NCBIfam" id="TIGR01245">
    <property type="entry name" value="trpD"/>
    <property type="match status" value="1"/>
</dbReference>
<dbReference type="PANTHER" id="PTHR43285">
    <property type="entry name" value="ANTHRANILATE PHOSPHORIBOSYLTRANSFERASE"/>
    <property type="match status" value="1"/>
</dbReference>
<dbReference type="PANTHER" id="PTHR43285:SF2">
    <property type="entry name" value="ANTHRANILATE PHOSPHORIBOSYLTRANSFERASE"/>
    <property type="match status" value="1"/>
</dbReference>
<dbReference type="Pfam" id="PF02885">
    <property type="entry name" value="Glycos_trans_3N"/>
    <property type="match status" value="1"/>
</dbReference>
<dbReference type="Pfam" id="PF00591">
    <property type="entry name" value="Glycos_transf_3"/>
    <property type="match status" value="1"/>
</dbReference>
<dbReference type="SUPFAM" id="SSF52418">
    <property type="entry name" value="Nucleoside phosphorylase/phosphoribosyltransferase catalytic domain"/>
    <property type="match status" value="1"/>
</dbReference>
<dbReference type="SUPFAM" id="SSF47648">
    <property type="entry name" value="Nucleoside phosphorylase/phosphoribosyltransferase N-terminal domain"/>
    <property type="match status" value="1"/>
</dbReference>
<protein>
    <recommendedName>
        <fullName evidence="1">Anthranilate phosphoribosyltransferase</fullName>
        <ecNumber evidence="1">2.4.2.18</ecNumber>
    </recommendedName>
</protein>
<accession>Q2KU98</accession>
<gene>
    <name evidence="1" type="primary">trpD</name>
    <name type="ordered locus">BAV3153</name>
</gene>
<reference key="1">
    <citation type="journal article" date="2006" name="J. Bacteriol.">
        <title>Comparison of the genome sequence of the poultry pathogen Bordetella avium with those of B. bronchiseptica, B. pertussis, and B. parapertussis reveals extensive diversity in surface structures associated with host interaction.</title>
        <authorList>
            <person name="Sebaihia M."/>
            <person name="Preston A."/>
            <person name="Maskell D.J."/>
            <person name="Kuzmiak H."/>
            <person name="Connell T.D."/>
            <person name="King N.D."/>
            <person name="Orndorff P.E."/>
            <person name="Miyamoto D.M."/>
            <person name="Thomson N.R."/>
            <person name="Harris D."/>
            <person name="Goble A."/>
            <person name="Lord A."/>
            <person name="Murphy L."/>
            <person name="Quail M.A."/>
            <person name="Rutter S."/>
            <person name="Squares R."/>
            <person name="Squares S."/>
            <person name="Woodward J."/>
            <person name="Parkhill J."/>
            <person name="Temple L.M."/>
        </authorList>
    </citation>
    <scope>NUCLEOTIDE SEQUENCE [LARGE SCALE GENOMIC DNA]</scope>
    <source>
        <strain>197N</strain>
    </source>
</reference>
<evidence type="ECO:0000255" key="1">
    <source>
        <dbReference type="HAMAP-Rule" id="MF_00211"/>
    </source>
</evidence>
<proteinExistence type="inferred from homology"/>
<name>TRPD_BORA1</name>
<keyword id="KW-0028">Amino-acid biosynthesis</keyword>
<keyword id="KW-0057">Aromatic amino acid biosynthesis</keyword>
<keyword id="KW-0328">Glycosyltransferase</keyword>
<keyword id="KW-0460">Magnesium</keyword>
<keyword id="KW-0479">Metal-binding</keyword>
<keyword id="KW-1185">Reference proteome</keyword>
<keyword id="KW-0808">Transferase</keyword>
<keyword id="KW-0822">Tryptophan biosynthesis</keyword>
<organism>
    <name type="scientific">Bordetella avium (strain 197N)</name>
    <dbReference type="NCBI Taxonomy" id="360910"/>
    <lineage>
        <taxon>Bacteria</taxon>
        <taxon>Pseudomonadati</taxon>
        <taxon>Pseudomonadota</taxon>
        <taxon>Betaproteobacteria</taxon>
        <taxon>Burkholderiales</taxon>
        <taxon>Alcaligenaceae</taxon>
        <taxon>Bordetella</taxon>
    </lineage>
</organism>
<feature type="chain" id="PRO_1000042993" description="Anthranilate phosphoribosyltransferase">
    <location>
        <begin position="1"/>
        <end position="343"/>
    </location>
</feature>
<feature type="binding site" evidence="1">
    <location>
        <position position="84"/>
    </location>
    <ligand>
        <name>5-phospho-alpha-D-ribose 1-diphosphate</name>
        <dbReference type="ChEBI" id="CHEBI:58017"/>
    </ligand>
</feature>
<feature type="binding site" evidence="1">
    <location>
        <position position="84"/>
    </location>
    <ligand>
        <name>anthranilate</name>
        <dbReference type="ChEBI" id="CHEBI:16567"/>
        <label>1</label>
    </ligand>
</feature>
<feature type="binding site" evidence="1">
    <location>
        <begin position="87"/>
        <end position="88"/>
    </location>
    <ligand>
        <name>5-phospho-alpha-D-ribose 1-diphosphate</name>
        <dbReference type="ChEBI" id="CHEBI:58017"/>
    </ligand>
</feature>
<feature type="binding site" evidence="1">
    <location>
        <position position="92"/>
    </location>
    <ligand>
        <name>5-phospho-alpha-D-ribose 1-diphosphate</name>
        <dbReference type="ChEBI" id="CHEBI:58017"/>
    </ligand>
</feature>
<feature type="binding site" evidence="1">
    <location>
        <begin position="94"/>
        <end position="97"/>
    </location>
    <ligand>
        <name>5-phospho-alpha-D-ribose 1-diphosphate</name>
        <dbReference type="ChEBI" id="CHEBI:58017"/>
    </ligand>
</feature>
<feature type="binding site" evidence="1">
    <location>
        <position position="96"/>
    </location>
    <ligand>
        <name>Mg(2+)</name>
        <dbReference type="ChEBI" id="CHEBI:18420"/>
        <label>1</label>
    </ligand>
</feature>
<feature type="binding site" evidence="1">
    <location>
        <begin position="112"/>
        <end position="120"/>
    </location>
    <ligand>
        <name>5-phospho-alpha-D-ribose 1-diphosphate</name>
        <dbReference type="ChEBI" id="CHEBI:58017"/>
    </ligand>
</feature>
<feature type="binding site" evidence="1">
    <location>
        <position position="115"/>
    </location>
    <ligand>
        <name>anthranilate</name>
        <dbReference type="ChEBI" id="CHEBI:16567"/>
        <label>1</label>
    </ligand>
</feature>
<feature type="binding site" evidence="1">
    <location>
        <position position="124"/>
    </location>
    <ligand>
        <name>5-phospho-alpha-D-ribose 1-diphosphate</name>
        <dbReference type="ChEBI" id="CHEBI:58017"/>
    </ligand>
</feature>
<feature type="binding site" evidence="1">
    <location>
        <position position="170"/>
    </location>
    <ligand>
        <name>anthranilate</name>
        <dbReference type="ChEBI" id="CHEBI:16567"/>
        <label>2</label>
    </ligand>
</feature>
<feature type="binding site" evidence="1">
    <location>
        <position position="229"/>
    </location>
    <ligand>
        <name>Mg(2+)</name>
        <dbReference type="ChEBI" id="CHEBI:18420"/>
        <label>2</label>
    </ligand>
</feature>
<feature type="binding site" evidence="1">
    <location>
        <position position="230"/>
    </location>
    <ligand>
        <name>Mg(2+)</name>
        <dbReference type="ChEBI" id="CHEBI:18420"/>
        <label>1</label>
    </ligand>
</feature>
<feature type="binding site" evidence="1">
    <location>
        <position position="230"/>
    </location>
    <ligand>
        <name>Mg(2+)</name>
        <dbReference type="ChEBI" id="CHEBI:18420"/>
        <label>2</label>
    </ligand>
</feature>
<sequence length="343" mass="36507">MTISATEALTRCIEHREIFHDEMLHLMRMLMRGEMSPQIASALLMGLRVKKETVGEITAAAQVMREFATPVVTPNPQDLLDMCGTGGDGSHTFNISTTAMFVAAAVGVPIAKHGNRSASSSSGSADVLEALGANLQLSPQAVAECIEATGIGFMFAPAHHGAMKNVAAVRKELGVRTIFNILGPLTNPAGAANQLMGVFHPDLVGIQVRVLERLGSRHVLVVHGKDGMDEASLGAATLVGELKNGVVREYEIHPEDYGLSMMSNRSIKVSNREQSRELVIEALDNVEGAARDIVALNAGLAIYAGNKADSIESALALAFEMIANGAARAKLEEFCAYTRKFAK</sequence>
<comment type="function">
    <text evidence="1">Catalyzes the transfer of the phosphoribosyl group of 5-phosphorylribose-1-pyrophosphate (PRPP) to anthranilate to yield N-(5'-phosphoribosyl)-anthranilate (PRA).</text>
</comment>
<comment type="catalytic activity">
    <reaction evidence="1">
        <text>N-(5-phospho-beta-D-ribosyl)anthranilate + diphosphate = 5-phospho-alpha-D-ribose 1-diphosphate + anthranilate</text>
        <dbReference type="Rhea" id="RHEA:11768"/>
        <dbReference type="ChEBI" id="CHEBI:16567"/>
        <dbReference type="ChEBI" id="CHEBI:18277"/>
        <dbReference type="ChEBI" id="CHEBI:33019"/>
        <dbReference type="ChEBI" id="CHEBI:58017"/>
        <dbReference type="EC" id="2.4.2.18"/>
    </reaction>
</comment>
<comment type="cofactor">
    <cofactor evidence="1">
        <name>Mg(2+)</name>
        <dbReference type="ChEBI" id="CHEBI:18420"/>
    </cofactor>
    <text evidence="1">Binds 2 magnesium ions per monomer.</text>
</comment>
<comment type="pathway">
    <text evidence="1">Amino-acid biosynthesis; L-tryptophan biosynthesis; L-tryptophan from chorismate: step 2/5.</text>
</comment>
<comment type="subunit">
    <text evidence="1">Homodimer.</text>
</comment>
<comment type="similarity">
    <text evidence="1">Belongs to the anthranilate phosphoribosyltransferase family.</text>
</comment>